<evidence type="ECO:0000250" key="1"/>
<evidence type="ECO:0000256" key="2">
    <source>
        <dbReference type="SAM" id="MobiDB-lite"/>
    </source>
</evidence>
<evidence type="ECO:0000305" key="3"/>
<gene>
    <name type="primary">rps4</name>
</gene>
<accession>P59151</accession>
<organism>
    <name type="scientific">Woodwardia radicans</name>
    <name type="common">Rooting chainfern</name>
    <dbReference type="NCBI Taxonomy" id="204638"/>
    <lineage>
        <taxon>Eukaryota</taxon>
        <taxon>Viridiplantae</taxon>
        <taxon>Streptophyta</taxon>
        <taxon>Embryophyta</taxon>
        <taxon>Tracheophyta</taxon>
        <taxon>Polypodiopsida</taxon>
        <taxon>Polypodiidae</taxon>
        <taxon>Polypodiales</taxon>
        <taxon>Aspleniineae</taxon>
        <taxon>Blechnaceae</taxon>
        <taxon>Woodwardioideae</taxon>
        <taxon>Woodwardia</taxon>
    </lineage>
</organism>
<dbReference type="EMBL" id="AF533865">
    <property type="protein sequence ID" value="AAN34644.1"/>
    <property type="molecule type" value="Genomic_DNA"/>
</dbReference>
<dbReference type="SMR" id="P59151"/>
<dbReference type="GO" id="GO:0009507">
    <property type="term" value="C:chloroplast"/>
    <property type="evidence" value="ECO:0007669"/>
    <property type="project" value="UniProtKB-SubCell"/>
</dbReference>
<dbReference type="GO" id="GO:0015935">
    <property type="term" value="C:small ribosomal subunit"/>
    <property type="evidence" value="ECO:0007669"/>
    <property type="project" value="InterPro"/>
</dbReference>
<dbReference type="GO" id="GO:0019843">
    <property type="term" value="F:rRNA binding"/>
    <property type="evidence" value="ECO:0007669"/>
    <property type="project" value="UniProtKB-UniRule"/>
</dbReference>
<dbReference type="GO" id="GO:0003735">
    <property type="term" value="F:structural constituent of ribosome"/>
    <property type="evidence" value="ECO:0007669"/>
    <property type="project" value="InterPro"/>
</dbReference>
<dbReference type="GO" id="GO:0042274">
    <property type="term" value="P:ribosomal small subunit biogenesis"/>
    <property type="evidence" value="ECO:0007669"/>
    <property type="project" value="TreeGrafter"/>
</dbReference>
<dbReference type="GO" id="GO:0006412">
    <property type="term" value="P:translation"/>
    <property type="evidence" value="ECO:0007669"/>
    <property type="project" value="UniProtKB-UniRule"/>
</dbReference>
<dbReference type="CDD" id="cd00165">
    <property type="entry name" value="S4"/>
    <property type="match status" value="1"/>
</dbReference>
<dbReference type="FunFam" id="3.10.290.10:FF:000001">
    <property type="entry name" value="30S ribosomal protein S4"/>
    <property type="match status" value="1"/>
</dbReference>
<dbReference type="Gene3D" id="1.10.1050.10">
    <property type="entry name" value="Ribosomal Protein S4 Delta 41, Chain A, domain 1"/>
    <property type="match status" value="1"/>
</dbReference>
<dbReference type="Gene3D" id="3.10.290.10">
    <property type="entry name" value="RNA-binding S4 domain"/>
    <property type="match status" value="1"/>
</dbReference>
<dbReference type="HAMAP" id="MF_01306_B">
    <property type="entry name" value="Ribosomal_uS4_B"/>
    <property type="match status" value="1"/>
</dbReference>
<dbReference type="InterPro" id="IPR022801">
    <property type="entry name" value="Ribosomal_uS4"/>
</dbReference>
<dbReference type="InterPro" id="IPR005709">
    <property type="entry name" value="Ribosomal_uS4_bac-type"/>
</dbReference>
<dbReference type="InterPro" id="IPR018079">
    <property type="entry name" value="Ribosomal_uS4_CS"/>
</dbReference>
<dbReference type="InterPro" id="IPR001912">
    <property type="entry name" value="Ribosomal_uS4_N"/>
</dbReference>
<dbReference type="InterPro" id="IPR002942">
    <property type="entry name" value="S4_RNA-bd"/>
</dbReference>
<dbReference type="InterPro" id="IPR036986">
    <property type="entry name" value="S4_RNA-bd_sf"/>
</dbReference>
<dbReference type="NCBIfam" id="NF003717">
    <property type="entry name" value="PRK05327.1"/>
    <property type="match status" value="1"/>
</dbReference>
<dbReference type="PANTHER" id="PTHR11831">
    <property type="entry name" value="30S 40S RIBOSOMAL PROTEIN"/>
    <property type="match status" value="1"/>
</dbReference>
<dbReference type="PANTHER" id="PTHR11831:SF4">
    <property type="entry name" value="SMALL RIBOSOMAL SUBUNIT PROTEIN US4M"/>
    <property type="match status" value="1"/>
</dbReference>
<dbReference type="Pfam" id="PF00163">
    <property type="entry name" value="Ribosomal_S4"/>
    <property type="match status" value="1"/>
</dbReference>
<dbReference type="Pfam" id="PF01479">
    <property type="entry name" value="S4"/>
    <property type="match status" value="1"/>
</dbReference>
<dbReference type="SMART" id="SM01390">
    <property type="entry name" value="Ribosomal_S4"/>
    <property type="match status" value="1"/>
</dbReference>
<dbReference type="SMART" id="SM00363">
    <property type="entry name" value="S4"/>
    <property type="match status" value="1"/>
</dbReference>
<dbReference type="SUPFAM" id="SSF55174">
    <property type="entry name" value="Alpha-L RNA-binding motif"/>
    <property type="match status" value="1"/>
</dbReference>
<dbReference type="PROSITE" id="PS00632">
    <property type="entry name" value="RIBOSOMAL_S4"/>
    <property type="match status" value="1"/>
</dbReference>
<dbReference type="PROSITE" id="PS50889">
    <property type="entry name" value="S4"/>
    <property type="match status" value="1"/>
</dbReference>
<sequence length="185" mass="20755">MGRGKTPNLGEFRVATDQSASRKISQFCVRLEAKQRLRFNYGLTERQLLKYVRIARKTRGSTGQVPPQLLEMRLDNVIFRLGMASTIPAARQLVNHRHILVNNRIVDVPSYRCKPKDIITVRNRPTSCNALKGESPGGGETPDHLTASLSEGSRPTGLVNRIANRESVSLNINELLVVEYYSRKA</sequence>
<feature type="chain" id="PRO_0000132681" description="Small ribosomal subunit protein uS4c">
    <location>
        <begin position="1"/>
        <end position="185"/>
    </location>
</feature>
<feature type="domain" description="S4 RNA-binding">
    <location>
        <begin position="72"/>
        <end position="134"/>
    </location>
</feature>
<feature type="region of interest" description="Disordered" evidence="2">
    <location>
        <begin position="132"/>
        <end position="154"/>
    </location>
</feature>
<protein>
    <recommendedName>
        <fullName evidence="3">Small ribosomal subunit protein uS4c</fullName>
    </recommendedName>
    <alternativeName>
        <fullName>30S ribosomal protein S4, chloroplastic</fullName>
    </alternativeName>
</protein>
<keyword id="KW-0150">Chloroplast</keyword>
<keyword id="KW-0934">Plastid</keyword>
<keyword id="KW-0687">Ribonucleoprotein</keyword>
<keyword id="KW-0689">Ribosomal protein</keyword>
<keyword id="KW-0694">RNA-binding</keyword>
<keyword id="KW-0699">rRNA-binding</keyword>
<reference key="1">
    <citation type="submission" date="2002-08" db="EMBL/GenBank/DDBJ databases">
        <title>Phylogenetics, biogeography, and classification of the Woodwardioid ferns (Blechnaceae).</title>
        <authorList>
            <person name="Cranfill R."/>
            <person name="Kato M."/>
        </authorList>
    </citation>
    <scope>NUCLEOTIDE SEQUENCE [GENOMIC DNA]</scope>
</reference>
<comment type="function">
    <text evidence="1">One of the primary rRNA binding proteins, it binds directly to 16S rRNA where it nucleates assembly of the body of the 30S subunit.</text>
</comment>
<comment type="function">
    <text evidence="1">With S5 and S12 plays an important role in translational accuracy.</text>
</comment>
<comment type="subunit">
    <text evidence="1">Part of the 30S ribosomal subunit. Contacts protein S5. The interaction surface between S4 and S5 is involved in control of translational fidelity (By similarity).</text>
</comment>
<comment type="subcellular location">
    <subcellularLocation>
        <location>Plastid</location>
        <location>Chloroplast</location>
    </subcellularLocation>
</comment>
<comment type="similarity">
    <text evidence="3">Belongs to the universal ribosomal protein uS4 family.</text>
</comment>
<proteinExistence type="inferred from homology"/>
<geneLocation type="chloroplast"/>
<name>RR4_WOORA</name>